<comment type="similarity">
    <text evidence="1">Belongs to the bacterial ribosomal protein bL36 family.</text>
</comment>
<dbReference type="EMBL" id="CP000444">
    <property type="protein sequence ID" value="ABI41221.1"/>
    <property type="molecule type" value="Genomic_DNA"/>
</dbReference>
<dbReference type="SMR" id="Q0I084"/>
<dbReference type="KEGG" id="shm:Shewmr7_0215"/>
<dbReference type="HOGENOM" id="CLU_135723_6_2_6"/>
<dbReference type="GO" id="GO:0005737">
    <property type="term" value="C:cytoplasm"/>
    <property type="evidence" value="ECO:0007669"/>
    <property type="project" value="UniProtKB-ARBA"/>
</dbReference>
<dbReference type="GO" id="GO:1990904">
    <property type="term" value="C:ribonucleoprotein complex"/>
    <property type="evidence" value="ECO:0007669"/>
    <property type="project" value="UniProtKB-KW"/>
</dbReference>
<dbReference type="GO" id="GO:0005840">
    <property type="term" value="C:ribosome"/>
    <property type="evidence" value="ECO:0007669"/>
    <property type="project" value="UniProtKB-KW"/>
</dbReference>
<dbReference type="GO" id="GO:0003735">
    <property type="term" value="F:structural constituent of ribosome"/>
    <property type="evidence" value="ECO:0007669"/>
    <property type="project" value="InterPro"/>
</dbReference>
<dbReference type="GO" id="GO:0006412">
    <property type="term" value="P:translation"/>
    <property type="evidence" value="ECO:0007669"/>
    <property type="project" value="UniProtKB-UniRule"/>
</dbReference>
<dbReference type="HAMAP" id="MF_00251">
    <property type="entry name" value="Ribosomal_bL36"/>
    <property type="match status" value="1"/>
</dbReference>
<dbReference type="InterPro" id="IPR000473">
    <property type="entry name" value="Ribosomal_bL36"/>
</dbReference>
<dbReference type="InterPro" id="IPR035977">
    <property type="entry name" value="Ribosomal_bL36_sp"/>
</dbReference>
<dbReference type="NCBIfam" id="TIGR01022">
    <property type="entry name" value="rpmJ_bact"/>
    <property type="match status" value="1"/>
</dbReference>
<dbReference type="PANTHER" id="PTHR42888">
    <property type="entry name" value="50S RIBOSOMAL PROTEIN L36, CHLOROPLASTIC"/>
    <property type="match status" value="1"/>
</dbReference>
<dbReference type="PANTHER" id="PTHR42888:SF1">
    <property type="entry name" value="LARGE RIBOSOMAL SUBUNIT PROTEIN BL36C"/>
    <property type="match status" value="1"/>
</dbReference>
<dbReference type="Pfam" id="PF00444">
    <property type="entry name" value="Ribosomal_L36"/>
    <property type="match status" value="1"/>
</dbReference>
<dbReference type="SUPFAM" id="SSF57840">
    <property type="entry name" value="Ribosomal protein L36"/>
    <property type="match status" value="1"/>
</dbReference>
<dbReference type="PROSITE" id="PS00828">
    <property type="entry name" value="RIBOSOMAL_L36"/>
    <property type="match status" value="1"/>
</dbReference>
<sequence>MKVRASVKKICRNCKIVKRSGVVRVICVEPKHKQRQG</sequence>
<evidence type="ECO:0000255" key="1">
    <source>
        <dbReference type="HAMAP-Rule" id="MF_00251"/>
    </source>
</evidence>
<evidence type="ECO:0000305" key="2"/>
<keyword id="KW-0687">Ribonucleoprotein</keyword>
<keyword id="KW-0689">Ribosomal protein</keyword>
<reference key="1">
    <citation type="submission" date="2006-08" db="EMBL/GenBank/DDBJ databases">
        <title>Complete sequence of chromosome 1 of Shewanella sp. MR-7.</title>
        <authorList>
            <person name="Copeland A."/>
            <person name="Lucas S."/>
            <person name="Lapidus A."/>
            <person name="Barry K."/>
            <person name="Detter J.C."/>
            <person name="Glavina del Rio T."/>
            <person name="Hammon N."/>
            <person name="Israni S."/>
            <person name="Dalin E."/>
            <person name="Tice H."/>
            <person name="Pitluck S."/>
            <person name="Kiss H."/>
            <person name="Brettin T."/>
            <person name="Bruce D."/>
            <person name="Han C."/>
            <person name="Tapia R."/>
            <person name="Gilna P."/>
            <person name="Schmutz J."/>
            <person name="Larimer F."/>
            <person name="Land M."/>
            <person name="Hauser L."/>
            <person name="Kyrpides N."/>
            <person name="Mikhailova N."/>
            <person name="Nealson K."/>
            <person name="Konstantinidis K."/>
            <person name="Klappenbach J."/>
            <person name="Tiedje J."/>
            <person name="Richardson P."/>
        </authorList>
    </citation>
    <scope>NUCLEOTIDE SEQUENCE [LARGE SCALE GENOMIC DNA]</scope>
    <source>
        <strain>MR-7</strain>
    </source>
</reference>
<proteinExistence type="inferred from homology"/>
<organism>
    <name type="scientific">Shewanella sp. (strain MR-7)</name>
    <dbReference type="NCBI Taxonomy" id="60481"/>
    <lineage>
        <taxon>Bacteria</taxon>
        <taxon>Pseudomonadati</taxon>
        <taxon>Pseudomonadota</taxon>
        <taxon>Gammaproteobacteria</taxon>
        <taxon>Alteromonadales</taxon>
        <taxon>Shewanellaceae</taxon>
        <taxon>Shewanella</taxon>
    </lineage>
</organism>
<feature type="chain" id="PRO_0000302294" description="Large ribosomal subunit protein bL36">
    <location>
        <begin position="1"/>
        <end position="37"/>
    </location>
</feature>
<gene>
    <name evidence="1" type="primary">rpmJ</name>
    <name type="ordered locus">Shewmr7_0215</name>
</gene>
<accession>Q0I084</accession>
<name>RL36_SHESR</name>
<protein>
    <recommendedName>
        <fullName evidence="1">Large ribosomal subunit protein bL36</fullName>
    </recommendedName>
    <alternativeName>
        <fullName evidence="2">50S ribosomal protein L36</fullName>
    </alternativeName>
</protein>